<organism>
    <name type="scientific">Orientia tsutsugamushi (strain Boryong)</name>
    <name type="common">Rickettsia tsutsugamushi</name>
    <dbReference type="NCBI Taxonomy" id="357244"/>
    <lineage>
        <taxon>Bacteria</taxon>
        <taxon>Pseudomonadati</taxon>
        <taxon>Pseudomonadota</taxon>
        <taxon>Alphaproteobacteria</taxon>
        <taxon>Rickettsiales</taxon>
        <taxon>Rickettsiaceae</taxon>
        <taxon>Rickettsieae</taxon>
        <taxon>Orientia</taxon>
    </lineage>
</organism>
<name>RS3_ORITB</name>
<evidence type="ECO:0000255" key="1">
    <source>
        <dbReference type="HAMAP-Rule" id="MF_01309"/>
    </source>
</evidence>
<evidence type="ECO:0000305" key="2"/>
<gene>
    <name evidence="1" type="primary">rpsC</name>
    <name type="ordered locus">OTBS_0370</name>
</gene>
<comment type="function">
    <text evidence="1">Binds the lower part of the 30S subunit head. Binds mRNA in the 70S ribosome, positioning it for translation.</text>
</comment>
<comment type="subunit">
    <text evidence="1">Part of the 30S ribosomal subunit. Forms a tight complex with proteins S10 and S14.</text>
</comment>
<comment type="similarity">
    <text evidence="1">Belongs to the universal ribosomal protein uS3 family.</text>
</comment>
<accession>A5CCK6</accession>
<reference key="1">
    <citation type="journal article" date="2007" name="Proc. Natl. Acad. Sci. U.S.A.">
        <title>The Orientia tsutsugamushi genome reveals massive proliferation of conjugative type IV secretion system and host-cell interaction genes.</title>
        <authorList>
            <person name="Cho N.-H."/>
            <person name="Kim H.-R."/>
            <person name="Lee J.-H."/>
            <person name="Kim S.-Y."/>
            <person name="Kim J."/>
            <person name="Cha S."/>
            <person name="Kim S.-Y."/>
            <person name="Darby A.C."/>
            <person name="Fuxelius H.-H."/>
            <person name="Yin J."/>
            <person name="Kim J.H."/>
            <person name="Kim J."/>
            <person name="Lee S.J."/>
            <person name="Koh Y.-S."/>
            <person name="Jang W.-J."/>
            <person name="Park K.-H."/>
            <person name="Andersson S.G.E."/>
            <person name="Choi M.-S."/>
            <person name="Kim I.-S."/>
        </authorList>
    </citation>
    <scope>NUCLEOTIDE SEQUENCE [LARGE SCALE GENOMIC DNA]</scope>
    <source>
        <strain>Boryong</strain>
    </source>
</reference>
<feature type="chain" id="PRO_0000323299" description="Small ribosomal subunit protein uS3">
    <location>
        <begin position="1"/>
        <end position="218"/>
    </location>
</feature>
<feature type="domain" description="KH type-2" evidence="1">
    <location>
        <begin position="40"/>
        <end position="109"/>
    </location>
</feature>
<sequence>MGQKVNPCIFRTGPNLPRNWESVLYAKNNYSDFLLKILKIRKIINTEYSFAQITKILIEWPSSKNIVVNIYAKKIGVIIGKSGGDIEKLKQNIAKITSADVSINIREVKKPELEEAFIAQTIAQQLERRQSFKKVMKKAIHASMKQGAKGIKIICSGRLGGVEIARSESYKEGRVPLQTIRADIRYAFAEAITTYGVIGVKVWVYRCDVNQSRINEVK</sequence>
<protein>
    <recommendedName>
        <fullName evidence="1">Small ribosomal subunit protein uS3</fullName>
    </recommendedName>
    <alternativeName>
        <fullName evidence="2">30S ribosomal protein S3</fullName>
    </alternativeName>
</protein>
<dbReference type="EMBL" id="AM494475">
    <property type="protein sequence ID" value="CAM79436.1"/>
    <property type="molecule type" value="Genomic_DNA"/>
</dbReference>
<dbReference type="RefSeq" id="WP_011944434.1">
    <property type="nucleotide sequence ID" value="NC_009488.1"/>
</dbReference>
<dbReference type="SMR" id="A5CCK6"/>
<dbReference type="KEGG" id="ots:OTBS_0370"/>
<dbReference type="eggNOG" id="COG0092">
    <property type="taxonomic scope" value="Bacteria"/>
</dbReference>
<dbReference type="HOGENOM" id="CLU_058591_0_2_5"/>
<dbReference type="Proteomes" id="UP000001565">
    <property type="component" value="Chromosome"/>
</dbReference>
<dbReference type="GO" id="GO:0022627">
    <property type="term" value="C:cytosolic small ribosomal subunit"/>
    <property type="evidence" value="ECO:0007669"/>
    <property type="project" value="TreeGrafter"/>
</dbReference>
<dbReference type="GO" id="GO:0003729">
    <property type="term" value="F:mRNA binding"/>
    <property type="evidence" value="ECO:0007669"/>
    <property type="project" value="UniProtKB-UniRule"/>
</dbReference>
<dbReference type="GO" id="GO:0019843">
    <property type="term" value="F:rRNA binding"/>
    <property type="evidence" value="ECO:0007669"/>
    <property type="project" value="UniProtKB-UniRule"/>
</dbReference>
<dbReference type="GO" id="GO:0003735">
    <property type="term" value="F:structural constituent of ribosome"/>
    <property type="evidence" value="ECO:0007669"/>
    <property type="project" value="InterPro"/>
</dbReference>
<dbReference type="GO" id="GO:0006412">
    <property type="term" value="P:translation"/>
    <property type="evidence" value="ECO:0007669"/>
    <property type="project" value="UniProtKB-UniRule"/>
</dbReference>
<dbReference type="CDD" id="cd02412">
    <property type="entry name" value="KH-II_30S_S3"/>
    <property type="match status" value="1"/>
</dbReference>
<dbReference type="FunFam" id="3.30.300.20:FF:000001">
    <property type="entry name" value="30S ribosomal protein S3"/>
    <property type="match status" value="1"/>
</dbReference>
<dbReference type="Gene3D" id="3.30.300.20">
    <property type="match status" value="1"/>
</dbReference>
<dbReference type="Gene3D" id="3.30.1140.32">
    <property type="entry name" value="Ribosomal protein S3, C-terminal domain"/>
    <property type="match status" value="1"/>
</dbReference>
<dbReference type="HAMAP" id="MF_01309_B">
    <property type="entry name" value="Ribosomal_uS3_B"/>
    <property type="match status" value="1"/>
</dbReference>
<dbReference type="InterPro" id="IPR015946">
    <property type="entry name" value="KH_dom-like_a/b"/>
</dbReference>
<dbReference type="InterPro" id="IPR004044">
    <property type="entry name" value="KH_dom_type_2"/>
</dbReference>
<dbReference type="InterPro" id="IPR009019">
    <property type="entry name" value="KH_sf_prok-type"/>
</dbReference>
<dbReference type="InterPro" id="IPR036419">
    <property type="entry name" value="Ribosomal_S3_C_sf"/>
</dbReference>
<dbReference type="InterPro" id="IPR005704">
    <property type="entry name" value="Ribosomal_uS3_bac-typ"/>
</dbReference>
<dbReference type="InterPro" id="IPR001351">
    <property type="entry name" value="Ribosomal_uS3_C"/>
</dbReference>
<dbReference type="NCBIfam" id="TIGR01009">
    <property type="entry name" value="rpsC_bact"/>
    <property type="match status" value="1"/>
</dbReference>
<dbReference type="PANTHER" id="PTHR11760">
    <property type="entry name" value="30S/40S RIBOSOMAL PROTEIN S3"/>
    <property type="match status" value="1"/>
</dbReference>
<dbReference type="PANTHER" id="PTHR11760:SF19">
    <property type="entry name" value="SMALL RIBOSOMAL SUBUNIT PROTEIN US3C"/>
    <property type="match status" value="1"/>
</dbReference>
<dbReference type="Pfam" id="PF07650">
    <property type="entry name" value="KH_2"/>
    <property type="match status" value="1"/>
</dbReference>
<dbReference type="Pfam" id="PF00189">
    <property type="entry name" value="Ribosomal_S3_C"/>
    <property type="match status" value="1"/>
</dbReference>
<dbReference type="SUPFAM" id="SSF54814">
    <property type="entry name" value="Prokaryotic type KH domain (KH-domain type II)"/>
    <property type="match status" value="1"/>
</dbReference>
<dbReference type="SUPFAM" id="SSF54821">
    <property type="entry name" value="Ribosomal protein S3 C-terminal domain"/>
    <property type="match status" value="1"/>
</dbReference>
<dbReference type="PROSITE" id="PS50823">
    <property type="entry name" value="KH_TYPE_2"/>
    <property type="match status" value="1"/>
</dbReference>
<proteinExistence type="inferred from homology"/>
<keyword id="KW-1185">Reference proteome</keyword>
<keyword id="KW-0687">Ribonucleoprotein</keyword>
<keyword id="KW-0689">Ribosomal protein</keyword>
<keyword id="KW-0694">RNA-binding</keyword>
<keyword id="KW-0699">rRNA-binding</keyword>